<accession>Q1C2U9</accession>
<organism>
    <name type="scientific">Yersinia pestis bv. Antiqua (strain Antiqua)</name>
    <dbReference type="NCBI Taxonomy" id="360102"/>
    <lineage>
        <taxon>Bacteria</taxon>
        <taxon>Pseudomonadati</taxon>
        <taxon>Pseudomonadota</taxon>
        <taxon>Gammaproteobacteria</taxon>
        <taxon>Enterobacterales</taxon>
        <taxon>Yersiniaceae</taxon>
        <taxon>Yersinia</taxon>
    </lineage>
</organism>
<feature type="chain" id="PRO_0000272882" description="Large ribosomal subunit protein uL23">
    <location>
        <begin position="1"/>
        <end position="100"/>
    </location>
</feature>
<evidence type="ECO:0000255" key="1">
    <source>
        <dbReference type="HAMAP-Rule" id="MF_01369"/>
    </source>
</evidence>
<evidence type="ECO:0000305" key="2"/>
<reference key="1">
    <citation type="journal article" date="2006" name="J. Bacteriol.">
        <title>Complete genome sequence of Yersinia pestis strains Antiqua and Nepal516: evidence of gene reduction in an emerging pathogen.</title>
        <authorList>
            <person name="Chain P.S.G."/>
            <person name="Hu P."/>
            <person name="Malfatti S.A."/>
            <person name="Radnedge L."/>
            <person name="Larimer F."/>
            <person name="Vergez L.M."/>
            <person name="Worsham P."/>
            <person name="Chu M.C."/>
            <person name="Andersen G.L."/>
        </authorList>
    </citation>
    <scope>NUCLEOTIDE SEQUENCE [LARGE SCALE GENOMIC DNA]</scope>
    <source>
        <strain>Antiqua</strain>
    </source>
</reference>
<protein>
    <recommendedName>
        <fullName evidence="1">Large ribosomal subunit protein uL23</fullName>
    </recommendedName>
    <alternativeName>
        <fullName evidence="2">50S ribosomal protein L23</fullName>
    </alternativeName>
</protein>
<comment type="function">
    <text evidence="1">One of the early assembly proteins it binds 23S rRNA. One of the proteins that surrounds the polypeptide exit tunnel on the outside of the ribosome. Forms the main docking site for trigger factor binding to the ribosome.</text>
</comment>
<comment type="subunit">
    <text evidence="1">Part of the 50S ribosomal subunit. Contacts protein L29, and trigger factor when it is bound to the ribosome.</text>
</comment>
<comment type="similarity">
    <text evidence="1">Belongs to the universal ribosomal protein uL23 family.</text>
</comment>
<keyword id="KW-0687">Ribonucleoprotein</keyword>
<keyword id="KW-0689">Ribosomal protein</keyword>
<keyword id="KW-0694">RNA-binding</keyword>
<keyword id="KW-0699">rRNA-binding</keyword>
<proteinExistence type="inferred from homology"/>
<dbReference type="EMBL" id="CP000308">
    <property type="protein sequence ID" value="ABG15223.1"/>
    <property type="molecule type" value="Genomic_DNA"/>
</dbReference>
<dbReference type="RefSeq" id="WP_002213423.1">
    <property type="nucleotide sequence ID" value="NZ_CP009906.1"/>
</dbReference>
<dbReference type="SMR" id="Q1C2U9"/>
<dbReference type="GeneID" id="96663194"/>
<dbReference type="KEGG" id="ypa:YPA_3261"/>
<dbReference type="Proteomes" id="UP000001971">
    <property type="component" value="Chromosome"/>
</dbReference>
<dbReference type="GO" id="GO:1990904">
    <property type="term" value="C:ribonucleoprotein complex"/>
    <property type="evidence" value="ECO:0007669"/>
    <property type="project" value="UniProtKB-KW"/>
</dbReference>
<dbReference type="GO" id="GO:0005840">
    <property type="term" value="C:ribosome"/>
    <property type="evidence" value="ECO:0007669"/>
    <property type="project" value="UniProtKB-KW"/>
</dbReference>
<dbReference type="GO" id="GO:0019843">
    <property type="term" value="F:rRNA binding"/>
    <property type="evidence" value="ECO:0007669"/>
    <property type="project" value="UniProtKB-UniRule"/>
</dbReference>
<dbReference type="GO" id="GO:0003735">
    <property type="term" value="F:structural constituent of ribosome"/>
    <property type="evidence" value="ECO:0007669"/>
    <property type="project" value="InterPro"/>
</dbReference>
<dbReference type="GO" id="GO:0006412">
    <property type="term" value="P:translation"/>
    <property type="evidence" value="ECO:0007669"/>
    <property type="project" value="UniProtKB-UniRule"/>
</dbReference>
<dbReference type="FunFam" id="3.30.70.330:FF:000001">
    <property type="entry name" value="50S ribosomal protein L23"/>
    <property type="match status" value="1"/>
</dbReference>
<dbReference type="Gene3D" id="3.30.70.330">
    <property type="match status" value="1"/>
</dbReference>
<dbReference type="HAMAP" id="MF_01369_B">
    <property type="entry name" value="Ribosomal_uL23_B"/>
    <property type="match status" value="1"/>
</dbReference>
<dbReference type="InterPro" id="IPR012677">
    <property type="entry name" value="Nucleotide-bd_a/b_plait_sf"/>
</dbReference>
<dbReference type="InterPro" id="IPR013025">
    <property type="entry name" value="Ribosomal_uL23-like"/>
</dbReference>
<dbReference type="InterPro" id="IPR012678">
    <property type="entry name" value="Ribosomal_uL23/eL15/eS24_sf"/>
</dbReference>
<dbReference type="InterPro" id="IPR001014">
    <property type="entry name" value="Ribosomal_uL23_CS"/>
</dbReference>
<dbReference type="NCBIfam" id="NF004358">
    <property type="entry name" value="PRK05738.1-1"/>
    <property type="match status" value="1"/>
</dbReference>
<dbReference type="NCBIfam" id="NF004359">
    <property type="entry name" value="PRK05738.1-3"/>
    <property type="match status" value="1"/>
</dbReference>
<dbReference type="NCBIfam" id="NF004363">
    <property type="entry name" value="PRK05738.2-4"/>
    <property type="match status" value="1"/>
</dbReference>
<dbReference type="NCBIfam" id="NF004366">
    <property type="entry name" value="PRK05738.3-2"/>
    <property type="match status" value="1"/>
</dbReference>
<dbReference type="PANTHER" id="PTHR11620">
    <property type="entry name" value="60S RIBOSOMAL PROTEIN L23A"/>
    <property type="match status" value="1"/>
</dbReference>
<dbReference type="Pfam" id="PF00276">
    <property type="entry name" value="Ribosomal_L23"/>
    <property type="match status" value="1"/>
</dbReference>
<dbReference type="SUPFAM" id="SSF54189">
    <property type="entry name" value="Ribosomal proteins S24e, L23 and L15e"/>
    <property type="match status" value="1"/>
</dbReference>
<dbReference type="PROSITE" id="PS00050">
    <property type="entry name" value="RIBOSOMAL_L23"/>
    <property type="match status" value="1"/>
</dbReference>
<gene>
    <name evidence="1" type="primary">rplW</name>
    <name type="ordered locus">YPA_3261</name>
</gene>
<name>RL23_YERPA</name>
<sequence>MIREERLLKVLRSPHVSEKASAAMEKNNTIVLKVAKDATKAEIKAAVQKLFEVEVEDVNTLLVKGKSKRHGQRVGRRSDWKKAYVTLKEGQNLDFIGGAE</sequence>